<dbReference type="EMBL" id="BC079719">
    <property type="protein sequence ID" value="AAH79719.1"/>
    <property type="molecule type" value="mRNA"/>
</dbReference>
<dbReference type="DNASU" id="447222"/>
<dbReference type="GeneID" id="447222"/>
<dbReference type="KEGG" id="xla:447222"/>
<dbReference type="AGR" id="Xenbase:XB-GENE-6078843"/>
<dbReference type="CTD" id="447222"/>
<dbReference type="Xenbase" id="XB-GENE-6078843">
    <property type="gene designation" value="cdc42se2.L"/>
</dbReference>
<dbReference type="OMA" id="DMNMGLA"/>
<dbReference type="OrthoDB" id="5559822at2759"/>
<dbReference type="Proteomes" id="UP000186698">
    <property type="component" value="Chromosome 3L"/>
</dbReference>
<dbReference type="Bgee" id="447222">
    <property type="expression patterns" value="Expressed in egg cell and 19 other cell types or tissues"/>
</dbReference>
<dbReference type="GO" id="GO:0005737">
    <property type="term" value="C:cytoplasm"/>
    <property type="evidence" value="ECO:0007669"/>
    <property type="project" value="UniProtKB-KW"/>
</dbReference>
<dbReference type="GO" id="GO:0005856">
    <property type="term" value="C:cytoskeleton"/>
    <property type="evidence" value="ECO:0007669"/>
    <property type="project" value="UniProtKB-SubCell"/>
</dbReference>
<dbReference type="GO" id="GO:0005886">
    <property type="term" value="C:plasma membrane"/>
    <property type="evidence" value="ECO:0000250"/>
    <property type="project" value="UniProtKB"/>
</dbReference>
<dbReference type="GO" id="GO:0031267">
    <property type="term" value="F:small GTPase binding"/>
    <property type="evidence" value="ECO:0007669"/>
    <property type="project" value="InterPro"/>
</dbReference>
<dbReference type="GO" id="GO:0008360">
    <property type="term" value="P:regulation of cell shape"/>
    <property type="evidence" value="ECO:0007669"/>
    <property type="project" value="UniProtKB-KW"/>
</dbReference>
<dbReference type="GO" id="GO:0035023">
    <property type="term" value="P:regulation of Rho protein signal transduction"/>
    <property type="evidence" value="ECO:0007669"/>
    <property type="project" value="InterPro"/>
</dbReference>
<dbReference type="GO" id="GO:0009966">
    <property type="term" value="P:regulation of signal transduction"/>
    <property type="evidence" value="ECO:0000250"/>
    <property type="project" value="UniProtKB"/>
</dbReference>
<dbReference type="CDD" id="cd00132">
    <property type="entry name" value="CRIB"/>
    <property type="match status" value="1"/>
</dbReference>
<dbReference type="FunFam" id="3.90.810.10:FF:000004">
    <property type="entry name" value="CDC42 small effector protein 2"/>
    <property type="match status" value="1"/>
</dbReference>
<dbReference type="Gene3D" id="3.90.810.10">
    <property type="entry name" value="CRIB domain"/>
    <property type="match status" value="1"/>
</dbReference>
<dbReference type="InterPro" id="IPR000095">
    <property type="entry name" value="CRIB_dom"/>
</dbReference>
<dbReference type="InterPro" id="IPR036936">
    <property type="entry name" value="CRIB_dom_sf"/>
</dbReference>
<dbReference type="InterPro" id="IPR039056">
    <property type="entry name" value="SPEC"/>
</dbReference>
<dbReference type="PANTHER" id="PTHR13502">
    <property type="entry name" value="CDC42 SMALL EFFECTOR PROTEIN HOMOLOG"/>
    <property type="match status" value="1"/>
</dbReference>
<dbReference type="PANTHER" id="PTHR13502:SF7">
    <property type="entry name" value="CRIB DOMAIN-CONTAINING PROTEIN"/>
    <property type="match status" value="1"/>
</dbReference>
<dbReference type="Pfam" id="PF00786">
    <property type="entry name" value="PBD"/>
    <property type="match status" value="1"/>
</dbReference>
<dbReference type="PROSITE" id="PS50108">
    <property type="entry name" value="CRIB"/>
    <property type="match status" value="1"/>
</dbReference>
<keyword id="KW-1003">Cell membrane</keyword>
<keyword id="KW-0133">Cell shape</keyword>
<keyword id="KW-0963">Cytoplasm</keyword>
<keyword id="KW-0206">Cytoskeleton</keyword>
<keyword id="KW-0449">Lipoprotein</keyword>
<keyword id="KW-0472">Membrane</keyword>
<keyword id="KW-0564">Palmitate</keyword>
<keyword id="KW-1185">Reference proteome</keyword>
<reference key="1">
    <citation type="submission" date="2004-08" db="EMBL/GenBank/DDBJ databases">
        <authorList>
            <consortium name="NIH - Xenopus Gene Collection (XGC) project"/>
        </authorList>
    </citation>
    <scope>NUCLEOTIDE SEQUENCE [LARGE SCALE MRNA]</scope>
    <source>
        <tissue>Ovary</tissue>
        <tissue>Spleen</tissue>
    </source>
</reference>
<comment type="function">
    <text evidence="1">Probably involved in the organization of the actin cytoskeleton by acting downstream of CDC42, inducing actin filament assembly.</text>
</comment>
<comment type="subcellular location">
    <subcellularLocation>
        <location evidence="1">Cytoplasm</location>
        <location evidence="1">Cytoskeleton</location>
    </subcellularLocation>
    <subcellularLocation>
        <location evidence="1">Cell membrane</location>
        <topology evidence="1">Lipid-anchor</topology>
    </subcellularLocation>
</comment>
<comment type="similarity">
    <text evidence="3">Belongs to the CDC42SE/SPEC family.</text>
</comment>
<organism>
    <name type="scientific">Xenopus laevis</name>
    <name type="common">African clawed frog</name>
    <dbReference type="NCBI Taxonomy" id="8355"/>
    <lineage>
        <taxon>Eukaryota</taxon>
        <taxon>Metazoa</taxon>
        <taxon>Chordata</taxon>
        <taxon>Craniata</taxon>
        <taxon>Vertebrata</taxon>
        <taxon>Euteleostomi</taxon>
        <taxon>Amphibia</taxon>
        <taxon>Batrachia</taxon>
        <taxon>Anura</taxon>
        <taxon>Pipoidea</taxon>
        <taxon>Pipidae</taxon>
        <taxon>Xenopodinae</taxon>
        <taxon>Xenopus</taxon>
        <taxon>Xenopus</taxon>
    </lineage>
</organism>
<gene>
    <name type="primary">cdc42se2-b</name>
</gene>
<sequence>MTEFLFCFSCCIGEQPQPKRRRRIDRSMIGEPMNFVHTAHVGSGDTNAGFAMGGSFQDQMKSKGGYTPGISEVAL</sequence>
<name>C4S2B_XENLA</name>
<evidence type="ECO:0000250" key="1"/>
<evidence type="ECO:0000255" key="2">
    <source>
        <dbReference type="PROSITE-ProRule" id="PRU00057"/>
    </source>
</evidence>
<evidence type="ECO:0000305" key="3"/>
<feature type="chain" id="PRO_0000334645" description="CDC42 small effector protein 2-B">
    <location>
        <begin position="1"/>
        <end position="75"/>
    </location>
</feature>
<feature type="domain" description="CRIB" evidence="2">
    <location>
        <begin position="29"/>
        <end position="42"/>
    </location>
</feature>
<feature type="lipid moiety-binding region" description="S-palmitoyl cysteine" evidence="1">
    <location>
        <position position="10"/>
    </location>
</feature>
<feature type="lipid moiety-binding region" description="S-palmitoyl cysteine" evidence="1">
    <location>
        <position position="11"/>
    </location>
</feature>
<protein>
    <recommendedName>
        <fullName>CDC42 small effector protein 2-B</fullName>
    </recommendedName>
</protein>
<proteinExistence type="inferred from homology"/>
<accession>Q6AX78</accession>